<evidence type="ECO:0000255" key="1">
    <source>
        <dbReference type="HAMAP-Rule" id="MF_00373"/>
    </source>
</evidence>
<evidence type="ECO:0000256" key="2">
    <source>
        <dbReference type="SAM" id="MobiDB-lite"/>
    </source>
</evidence>
<evidence type="ECO:0000305" key="3"/>
<gene>
    <name evidence="1" type="primary">rpmB</name>
    <name type="ordered locus">VIBHAR_00654</name>
</gene>
<keyword id="KW-0687">Ribonucleoprotein</keyword>
<keyword id="KW-0689">Ribosomal protein</keyword>
<sequence length="78" mass="9036">MSRVCQVTGKRPVTGNNRSHARNATKRRFLPNLQTHRFWVESEKRFVKLRLSAKGMRIIDKKGIDTVLADMRARGENV</sequence>
<proteinExistence type="inferred from homology"/>
<organism>
    <name type="scientific">Vibrio campbellii (strain ATCC BAA-1116)</name>
    <dbReference type="NCBI Taxonomy" id="2902295"/>
    <lineage>
        <taxon>Bacteria</taxon>
        <taxon>Pseudomonadati</taxon>
        <taxon>Pseudomonadota</taxon>
        <taxon>Gammaproteobacteria</taxon>
        <taxon>Vibrionales</taxon>
        <taxon>Vibrionaceae</taxon>
        <taxon>Vibrio</taxon>
    </lineage>
</organism>
<name>RL28_VIBC1</name>
<dbReference type="EMBL" id="CP000789">
    <property type="protein sequence ID" value="ABU69656.1"/>
    <property type="molecule type" value="Genomic_DNA"/>
</dbReference>
<dbReference type="RefSeq" id="WP_005384783.1">
    <property type="nucleotide sequence ID" value="NC_022269.1"/>
</dbReference>
<dbReference type="SMR" id="A7MSP8"/>
<dbReference type="GeneID" id="83583185"/>
<dbReference type="KEGG" id="vha:VIBHAR_00654"/>
<dbReference type="PATRIC" id="fig|338187.25.peg.1961"/>
<dbReference type="Proteomes" id="UP000008152">
    <property type="component" value="Chromosome I"/>
</dbReference>
<dbReference type="GO" id="GO:0022625">
    <property type="term" value="C:cytosolic large ribosomal subunit"/>
    <property type="evidence" value="ECO:0007669"/>
    <property type="project" value="TreeGrafter"/>
</dbReference>
<dbReference type="GO" id="GO:0003735">
    <property type="term" value="F:structural constituent of ribosome"/>
    <property type="evidence" value="ECO:0007669"/>
    <property type="project" value="InterPro"/>
</dbReference>
<dbReference type="GO" id="GO:0006412">
    <property type="term" value="P:translation"/>
    <property type="evidence" value="ECO:0007669"/>
    <property type="project" value="UniProtKB-UniRule"/>
</dbReference>
<dbReference type="FunFam" id="2.30.170.40:FF:000001">
    <property type="entry name" value="50S ribosomal protein L28"/>
    <property type="match status" value="1"/>
</dbReference>
<dbReference type="Gene3D" id="2.30.170.40">
    <property type="entry name" value="Ribosomal protein L28/L24"/>
    <property type="match status" value="1"/>
</dbReference>
<dbReference type="HAMAP" id="MF_00373">
    <property type="entry name" value="Ribosomal_bL28"/>
    <property type="match status" value="1"/>
</dbReference>
<dbReference type="InterPro" id="IPR026569">
    <property type="entry name" value="Ribosomal_bL28"/>
</dbReference>
<dbReference type="InterPro" id="IPR034704">
    <property type="entry name" value="Ribosomal_bL28/bL31-like_sf"/>
</dbReference>
<dbReference type="InterPro" id="IPR001383">
    <property type="entry name" value="Ribosomal_bL28_bact-type"/>
</dbReference>
<dbReference type="InterPro" id="IPR037147">
    <property type="entry name" value="Ribosomal_bL28_sf"/>
</dbReference>
<dbReference type="NCBIfam" id="TIGR00009">
    <property type="entry name" value="L28"/>
    <property type="match status" value="1"/>
</dbReference>
<dbReference type="PANTHER" id="PTHR13528">
    <property type="entry name" value="39S RIBOSOMAL PROTEIN L28, MITOCHONDRIAL"/>
    <property type="match status" value="1"/>
</dbReference>
<dbReference type="PANTHER" id="PTHR13528:SF2">
    <property type="entry name" value="LARGE RIBOSOMAL SUBUNIT PROTEIN BL28M"/>
    <property type="match status" value="1"/>
</dbReference>
<dbReference type="Pfam" id="PF00830">
    <property type="entry name" value="Ribosomal_L28"/>
    <property type="match status" value="1"/>
</dbReference>
<dbReference type="SUPFAM" id="SSF143800">
    <property type="entry name" value="L28p-like"/>
    <property type="match status" value="1"/>
</dbReference>
<protein>
    <recommendedName>
        <fullName evidence="1">Large ribosomal subunit protein bL28</fullName>
    </recommendedName>
    <alternativeName>
        <fullName evidence="3">50S ribosomal protein L28</fullName>
    </alternativeName>
</protein>
<accession>A7MSP8</accession>
<comment type="similarity">
    <text evidence="1">Belongs to the bacterial ribosomal protein bL28 family.</text>
</comment>
<feature type="chain" id="PRO_1000007400" description="Large ribosomal subunit protein bL28">
    <location>
        <begin position="1"/>
        <end position="78"/>
    </location>
</feature>
<feature type="region of interest" description="Disordered" evidence="2">
    <location>
        <begin position="1"/>
        <end position="20"/>
    </location>
</feature>
<reference key="1">
    <citation type="submission" date="2007-08" db="EMBL/GenBank/DDBJ databases">
        <authorList>
            <consortium name="The Vibrio harveyi Genome Sequencing Project"/>
            <person name="Bassler B."/>
            <person name="Clifton S.W."/>
            <person name="Fulton L."/>
            <person name="Delehaunty K."/>
            <person name="Fronick C."/>
            <person name="Harrison M."/>
            <person name="Markivic C."/>
            <person name="Fulton R."/>
            <person name="Tin-Wollam A.-M."/>
            <person name="Shah N."/>
            <person name="Pepin K."/>
            <person name="Nash W."/>
            <person name="Thiruvilangam P."/>
            <person name="Bhonagiri V."/>
            <person name="Waters C."/>
            <person name="Tu K.C."/>
            <person name="Irgon J."/>
            <person name="Wilson R.K."/>
        </authorList>
    </citation>
    <scope>NUCLEOTIDE SEQUENCE [LARGE SCALE GENOMIC DNA]</scope>
    <source>
        <strain>ATCC BAA-1116 / BB120</strain>
    </source>
</reference>